<protein>
    <recommendedName>
        <fullName evidence="1">4-hydroxy-2-oxovalerate aldolase</fullName>
        <shortName evidence="1">HOA</shortName>
        <ecNumber evidence="1">4.1.3.39</ecNumber>
    </recommendedName>
    <alternativeName>
        <fullName evidence="1">4-hydroxy-2-keto-pentanoic acid aldolase</fullName>
    </alternativeName>
    <alternativeName>
        <fullName evidence="1">4-hydroxy-2-oxopentanoate aldolase</fullName>
    </alternativeName>
</protein>
<comment type="catalytic activity">
    <reaction evidence="1">
        <text>(S)-4-hydroxy-2-oxopentanoate = acetaldehyde + pyruvate</text>
        <dbReference type="Rhea" id="RHEA:22624"/>
        <dbReference type="ChEBI" id="CHEBI:15343"/>
        <dbReference type="ChEBI" id="CHEBI:15361"/>
        <dbReference type="ChEBI" id="CHEBI:73143"/>
        <dbReference type="EC" id="4.1.3.39"/>
    </reaction>
</comment>
<comment type="similarity">
    <text evidence="1">Belongs to the 4-hydroxy-2-oxovalerate aldolase family.</text>
</comment>
<dbReference type="EC" id="4.1.3.39" evidence="1"/>
<dbReference type="EMBL" id="AM167904">
    <property type="protein sequence ID" value="CAJ48205.1"/>
    <property type="molecule type" value="Genomic_DNA"/>
</dbReference>
<dbReference type="SMR" id="Q2KXU5"/>
<dbReference type="STRING" id="360910.BAV0600"/>
<dbReference type="KEGG" id="bav:BAV0600"/>
<dbReference type="eggNOG" id="COG0119">
    <property type="taxonomic scope" value="Bacteria"/>
</dbReference>
<dbReference type="HOGENOM" id="CLU_049173_0_0_4"/>
<dbReference type="Proteomes" id="UP000001977">
    <property type="component" value="Chromosome"/>
</dbReference>
<dbReference type="GO" id="GO:0003852">
    <property type="term" value="F:2-isopropylmalate synthase activity"/>
    <property type="evidence" value="ECO:0007669"/>
    <property type="project" value="TreeGrafter"/>
</dbReference>
<dbReference type="GO" id="GO:0008701">
    <property type="term" value="F:4-hydroxy-2-oxovalerate aldolase activity"/>
    <property type="evidence" value="ECO:0007669"/>
    <property type="project" value="UniProtKB-UniRule"/>
</dbReference>
<dbReference type="GO" id="GO:0030145">
    <property type="term" value="F:manganese ion binding"/>
    <property type="evidence" value="ECO:0007669"/>
    <property type="project" value="UniProtKB-UniRule"/>
</dbReference>
<dbReference type="GO" id="GO:0009056">
    <property type="term" value="P:catabolic process"/>
    <property type="evidence" value="ECO:0007669"/>
    <property type="project" value="UniProtKB-KW"/>
</dbReference>
<dbReference type="GO" id="GO:0009098">
    <property type="term" value="P:L-leucine biosynthetic process"/>
    <property type="evidence" value="ECO:0007669"/>
    <property type="project" value="TreeGrafter"/>
</dbReference>
<dbReference type="CDD" id="cd07943">
    <property type="entry name" value="DRE_TIM_HOA"/>
    <property type="match status" value="1"/>
</dbReference>
<dbReference type="FunFam" id="1.10.8.60:FF:000042">
    <property type="entry name" value="4-hydroxy-2-oxovalerate aldolase"/>
    <property type="match status" value="1"/>
</dbReference>
<dbReference type="Gene3D" id="1.10.8.60">
    <property type="match status" value="1"/>
</dbReference>
<dbReference type="Gene3D" id="3.20.20.70">
    <property type="entry name" value="Aldolase class I"/>
    <property type="match status" value="1"/>
</dbReference>
<dbReference type="HAMAP" id="MF_01656">
    <property type="entry name" value="HOA"/>
    <property type="match status" value="1"/>
</dbReference>
<dbReference type="InterPro" id="IPR050073">
    <property type="entry name" value="2-IPM_HCS-like"/>
</dbReference>
<dbReference type="InterPro" id="IPR017629">
    <property type="entry name" value="4OH_2_O-val_aldolase"/>
</dbReference>
<dbReference type="InterPro" id="IPR013785">
    <property type="entry name" value="Aldolase_TIM"/>
</dbReference>
<dbReference type="InterPro" id="IPR012425">
    <property type="entry name" value="DmpG_comm"/>
</dbReference>
<dbReference type="InterPro" id="IPR035685">
    <property type="entry name" value="DRE_TIM_HOA"/>
</dbReference>
<dbReference type="InterPro" id="IPR000891">
    <property type="entry name" value="PYR_CT"/>
</dbReference>
<dbReference type="NCBIfam" id="TIGR03217">
    <property type="entry name" value="4OH_2_O_val_ald"/>
    <property type="match status" value="1"/>
</dbReference>
<dbReference type="NCBIfam" id="NF006049">
    <property type="entry name" value="PRK08195.1"/>
    <property type="match status" value="1"/>
</dbReference>
<dbReference type="PANTHER" id="PTHR10277:SF9">
    <property type="entry name" value="2-ISOPROPYLMALATE SYNTHASE 1, CHLOROPLASTIC-RELATED"/>
    <property type="match status" value="1"/>
</dbReference>
<dbReference type="PANTHER" id="PTHR10277">
    <property type="entry name" value="HOMOCITRATE SYNTHASE-RELATED"/>
    <property type="match status" value="1"/>
</dbReference>
<dbReference type="Pfam" id="PF07836">
    <property type="entry name" value="DmpG_comm"/>
    <property type="match status" value="1"/>
</dbReference>
<dbReference type="Pfam" id="PF00682">
    <property type="entry name" value="HMGL-like"/>
    <property type="match status" value="1"/>
</dbReference>
<dbReference type="SUPFAM" id="SSF51569">
    <property type="entry name" value="Aldolase"/>
    <property type="match status" value="1"/>
</dbReference>
<dbReference type="SUPFAM" id="SSF89000">
    <property type="entry name" value="post-HMGL domain-like"/>
    <property type="match status" value="1"/>
</dbReference>
<dbReference type="PROSITE" id="PS50991">
    <property type="entry name" value="PYR_CT"/>
    <property type="match status" value="1"/>
</dbReference>
<organism>
    <name type="scientific">Bordetella avium (strain 197N)</name>
    <dbReference type="NCBI Taxonomy" id="360910"/>
    <lineage>
        <taxon>Bacteria</taxon>
        <taxon>Pseudomonadati</taxon>
        <taxon>Pseudomonadota</taxon>
        <taxon>Betaproteobacteria</taxon>
        <taxon>Burkholderiales</taxon>
        <taxon>Alcaligenaceae</taxon>
        <taxon>Bordetella</taxon>
    </lineage>
</organism>
<reference key="1">
    <citation type="journal article" date="2006" name="J. Bacteriol.">
        <title>Comparison of the genome sequence of the poultry pathogen Bordetella avium with those of B. bronchiseptica, B. pertussis, and B. parapertussis reveals extensive diversity in surface structures associated with host interaction.</title>
        <authorList>
            <person name="Sebaihia M."/>
            <person name="Preston A."/>
            <person name="Maskell D.J."/>
            <person name="Kuzmiak H."/>
            <person name="Connell T.D."/>
            <person name="King N.D."/>
            <person name="Orndorff P.E."/>
            <person name="Miyamoto D.M."/>
            <person name="Thomson N.R."/>
            <person name="Harris D."/>
            <person name="Goble A."/>
            <person name="Lord A."/>
            <person name="Murphy L."/>
            <person name="Quail M.A."/>
            <person name="Rutter S."/>
            <person name="Squares R."/>
            <person name="Squares S."/>
            <person name="Woodward J."/>
            <person name="Parkhill J."/>
            <person name="Temple L.M."/>
        </authorList>
    </citation>
    <scope>NUCLEOTIDE SEQUENCE [LARGE SCALE GENOMIC DNA]</scope>
    <source>
        <strain>197N</strain>
    </source>
</reference>
<sequence>MRTHMTANRKIYISDVTLRDGSHAIRHQYSVNDARRIAQALDEARVDSIEVAHGDGLQGSSFNYGFGAHTDLEWIHAVASVVKHAKIATLLLPGIGTVHDLKAAYDAGVRVVRVATHCTEADISRQHIECARELGMEAVGFLMMSHMTTAEVLAGQAKLMESYGATCCYVVDSGGALSMQDVRDRFRALKDVLKPETHTGMHAHHNLSLGVANSIVAVESGCDRVDASLAGMGAGAGNAPLEVFIAAAERMGWNHGTDLYKLMDAADDIVRPLQDRPVRVDRETLALGYAGVYSSFLRHSETAAAKYGLKTVDILVELGKRRMVGGQEDMIVDVALDLLRQRRSGAAAV</sequence>
<evidence type="ECO:0000255" key="1">
    <source>
        <dbReference type="HAMAP-Rule" id="MF_01656"/>
    </source>
</evidence>
<name>HOA_BORA1</name>
<proteinExistence type="inferred from homology"/>
<keyword id="KW-0058">Aromatic hydrocarbons catabolism</keyword>
<keyword id="KW-0456">Lyase</keyword>
<keyword id="KW-0464">Manganese</keyword>
<keyword id="KW-0479">Metal-binding</keyword>
<keyword id="KW-1185">Reference proteome</keyword>
<gene>
    <name type="primary">bphF</name>
    <name type="ordered locus">BAV0600</name>
</gene>
<feature type="chain" id="PRO_0000387792" description="4-hydroxy-2-oxovalerate aldolase">
    <location>
        <begin position="1"/>
        <end position="349"/>
    </location>
</feature>
<feature type="domain" description="Pyruvate carboxyltransferase" evidence="1">
    <location>
        <begin position="11"/>
        <end position="263"/>
    </location>
</feature>
<feature type="active site" description="Proton acceptor" evidence="1">
    <location>
        <position position="23"/>
    </location>
</feature>
<feature type="binding site" evidence="1">
    <location>
        <begin position="19"/>
        <end position="20"/>
    </location>
    <ligand>
        <name>substrate</name>
    </ligand>
</feature>
<feature type="binding site" evidence="1">
    <location>
        <position position="20"/>
    </location>
    <ligand>
        <name>Mn(2+)</name>
        <dbReference type="ChEBI" id="CHEBI:29035"/>
    </ligand>
</feature>
<feature type="binding site" evidence="1">
    <location>
        <position position="173"/>
    </location>
    <ligand>
        <name>substrate</name>
    </ligand>
</feature>
<feature type="binding site" evidence="1">
    <location>
        <position position="202"/>
    </location>
    <ligand>
        <name>Mn(2+)</name>
        <dbReference type="ChEBI" id="CHEBI:29035"/>
    </ligand>
</feature>
<feature type="binding site" evidence="1">
    <location>
        <position position="202"/>
    </location>
    <ligand>
        <name>substrate</name>
    </ligand>
</feature>
<feature type="binding site" evidence="1">
    <location>
        <position position="204"/>
    </location>
    <ligand>
        <name>Mn(2+)</name>
        <dbReference type="ChEBI" id="CHEBI:29035"/>
    </ligand>
</feature>
<feature type="binding site" evidence="1">
    <location>
        <position position="293"/>
    </location>
    <ligand>
        <name>substrate</name>
    </ligand>
</feature>
<feature type="site" description="Transition state stabilizer" evidence="1">
    <location>
        <position position="19"/>
    </location>
</feature>
<accession>Q2KXU5</accession>